<evidence type="ECO:0000255" key="1">
    <source>
        <dbReference type="HAMAP-Rule" id="MF_00423"/>
    </source>
</evidence>
<feature type="chain" id="PRO_1000050387" description="L-seryl-tRNA(Sec) selenium transferase">
    <location>
        <begin position="1"/>
        <end position="462"/>
    </location>
</feature>
<feature type="modified residue" description="N6-(pyridoxal phosphate)lysine" evidence="1">
    <location>
        <position position="294"/>
    </location>
</feature>
<protein>
    <recommendedName>
        <fullName evidence="1">L-seryl-tRNA(Sec) selenium transferase</fullName>
        <ecNumber evidence="1">2.9.1.1</ecNumber>
    </recommendedName>
    <alternativeName>
        <fullName evidence="1">Selenocysteine synthase</fullName>
        <shortName evidence="1">Sec synthase</shortName>
    </alternativeName>
    <alternativeName>
        <fullName evidence="1">Selenocysteinyl-tRNA(Sec) synthase</fullName>
    </alternativeName>
</protein>
<organism>
    <name type="scientific">Yersinia pestis bv. Antiqua (strain Antiqua)</name>
    <dbReference type="NCBI Taxonomy" id="360102"/>
    <lineage>
        <taxon>Bacteria</taxon>
        <taxon>Pseudomonadati</taxon>
        <taxon>Pseudomonadota</taxon>
        <taxon>Gammaproteobacteria</taxon>
        <taxon>Enterobacterales</taxon>
        <taxon>Yersiniaceae</taxon>
        <taxon>Yersinia</taxon>
    </lineage>
</organism>
<gene>
    <name evidence="1" type="primary">selA</name>
    <name type="ordered locus">YPA_3031</name>
</gene>
<keyword id="KW-0963">Cytoplasm</keyword>
<keyword id="KW-0648">Protein biosynthesis</keyword>
<keyword id="KW-0663">Pyridoxal phosphate</keyword>
<keyword id="KW-0711">Selenium</keyword>
<keyword id="KW-0808">Transferase</keyword>
<dbReference type="EC" id="2.9.1.1" evidence="1"/>
<dbReference type="EMBL" id="CP000308">
    <property type="protein sequence ID" value="ABG14993.1"/>
    <property type="molecule type" value="Genomic_DNA"/>
</dbReference>
<dbReference type="RefSeq" id="WP_002209608.1">
    <property type="nucleotide sequence ID" value="NZ_CP009906.1"/>
</dbReference>
<dbReference type="SMR" id="Q1C3H9"/>
<dbReference type="GeneID" id="57974660"/>
<dbReference type="KEGG" id="ypa:YPA_3031"/>
<dbReference type="UniPathway" id="UPA00906">
    <property type="reaction ID" value="UER00896"/>
</dbReference>
<dbReference type="Proteomes" id="UP000001971">
    <property type="component" value="Chromosome"/>
</dbReference>
<dbReference type="GO" id="GO:0005737">
    <property type="term" value="C:cytoplasm"/>
    <property type="evidence" value="ECO:0007669"/>
    <property type="project" value="UniProtKB-SubCell"/>
</dbReference>
<dbReference type="GO" id="GO:0004125">
    <property type="term" value="F:L-seryl-tRNA(Sec) selenium transferase activity"/>
    <property type="evidence" value="ECO:0007669"/>
    <property type="project" value="UniProtKB-UniRule"/>
</dbReference>
<dbReference type="GO" id="GO:0001717">
    <property type="term" value="P:conversion of seryl-tRNAsec to selenocys-tRNAsec"/>
    <property type="evidence" value="ECO:0007669"/>
    <property type="project" value="UniProtKB-UniRule"/>
</dbReference>
<dbReference type="GO" id="GO:0001514">
    <property type="term" value="P:selenocysteine incorporation"/>
    <property type="evidence" value="ECO:0007669"/>
    <property type="project" value="UniProtKB-UniRule"/>
</dbReference>
<dbReference type="FunFam" id="3.40.640.10:FF:000028">
    <property type="entry name" value="L-seryl-tRNA(Sec) selenium transferase"/>
    <property type="match status" value="1"/>
</dbReference>
<dbReference type="Gene3D" id="3.90.1150.180">
    <property type="match status" value="1"/>
</dbReference>
<dbReference type="Gene3D" id="3.40.640.10">
    <property type="entry name" value="Type I PLP-dependent aspartate aminotransferase-like (Major domain)"/>
    <property type="match status" value="1"/>
</dbReference>
<dbReference type="HAMAP" id="MF_00423">
    <property type="entry name" value="SelA"/>
    <property type="match status" value="1"/>
</dbReference>
<dbReference type="InterPro" id="IPR015424">
    <property type="entry name" value="PyrdxlP-dep_Trfase"/>
</dbReference>
<dbReference type="InterPro" id="IPR015421">
    <property type="entry name" value="PyrdxlP-dep_Trfase_major"/>
</dbReference>
<dbReference type="InterPro" id="IPR018319">
    <property type="entry name" value="SelA-like"/>
</dbReference>
<dbReference type="InterPro" id="IPR004534">
    <property type="entry name" value="SelA_trans"/>
</dbReference>
<dbReference type="InterPro" id="IPR025862">
    <property type="entry name" value="SelA_trans_N_dom"/>
</dbReference>
<dbReference type="NCBIfam" id="TIGR00474">
    <property type="entry name" value="selA"/>
    <property type="match status" value="1"/>
</dbReference>
<dbReference type="PANTHER" id="PTHR32328">
    <property type="entry name" value="L-SERYL-TRNA(SEC) SELENIUM TRANSFERASE"/>
    <property type="match status" value="1"/>
</dbReference>
<dbReference type="PANTHER" id="PTHR32328:SF0">
    <property type="entry name" value="L-SERYL-TRNA(SEC) SELENIUM TRANSFERASE"/>
    <property type="match status" value="1"/>
</dbReference>
<dbReference type="Pfam" id="PF12390">
    <property type="entry name" value="Se-cys_synth_N"/>
    <property type="match status" value="1"/>
</dbReference>
<dbReference type="Pfam" id="PF03841">
    <property type="entry name" value="SelA"/>
    <property type="match status" value="1"/>
</dbReference>
<dbReference type="SUPFAM" id="SSF53383">
    <property type="entry name" value="PLP-dependent transferases"/>
    <property type="match status" value="1"/>
</dbReference>
<name>SELA_YERPA</name>
<proteinExistence type="inferred from homology"/>
<comment type="function">
    <text evidence="1">Converts seryl-tRNA(Sec) to selenocysteinyl-tRNA(Sec) required for selenoprotein biosynthesis.</text>
</comment>
<comment type="catalytic activity">
    <reaction evidence="1">
        <text>L-seryl-tRNA(Sec) + selenophosphate + H(+) = L-selenocysteinyl-tRNA(Sec) + phosphate</text>
        <dbReference type="Rhea" id="RHEA:22728"/>
        <dbReference type="Rhea" id="RHEA-COMP:9742"/>
        <dbReference type="Rhea" id="RHEA-COMP:9743"/>
        <dbReference type="ChEBI" id="CHEBI:15378"/>
        <dbReference type="ChEBI" id="CHEBI:16144"/>
        <dbReference type="ChEBI" id="CHEBI:43474"/>
        <dbReference type="ChEBI" id="CHEBI:78533"/>
        <dbReference type="ChEBI" id="CHEBI:78573"/>
        <dbReference type="EC" id="2.9.1.1"/>
    </reaction>
</comment>
<comment type="cofactor">
    <cofactor evidence="1">
        <name>pyridoxal 5'-phosphate</name>
        <dbReference type="ChEBI" id="CHEBI:597326"/>
    </cofactor>
</comment>
<comment type="pathway">
    <text evidence="1">Aminoacyl-tRNA biosynthesis; selenocysteinyl-tRNA(Sec) biosynthesis; selenocysteinyl-tRNA(Sec) from L-seryl-tRNA(Sec) (bacterial route): step 1/1.</text>
</comment>
<comment type="subunit">
    <text evidence="1">Homodecamer; pentamer of dimers. Binds only one seryl-tRNA(Sec) per dimer.</text>
</comment>
<comment type="subcellular location">
    <subcellularLocation>
        <location evidence="1">Cytoplasm</location>
    </subcellularLocation>
</comment>
<comment type="similarity">
    <text evidence="1">Belongs to the SelA family.</text>
</comment>
<accession>Q1C3H9</accession>
<reference key="1">
    <citation type="journal article" date="2006" name="J. Bacteriol.">
        <title>Complete genome sequence of Yersinia pestis strains Antiqua and Nepal516: evidence of gene reduction in an emerging pathogen.</title>
        <authorList>
            <person name="Chain P.S.G."/>
            <person name="Hu P."/>
            <person name="Malfatti S.A."/>
            <person name="Radnedge L."/>
            <person name="Larimer F."/>
            <person name="Vergez L.M."/>
            <person name="Worsham P."/>
            <person name="Chu M.C."/>
            <person name="Andersen G.L."/>
        </authorList>
    </citation>
    <scope>NUCLEOTIDE SEQUENCE [LARGE SCALE GENOMIC DNA]</scope>
    <source>
        <strain>Antiqua</strain>
    </source>
</reference>
<sequence length="462" mass="50209">MSAEPHPLYRQLPAIDRLLNEPEMAPLLAEYGPVLLADTLRQLQAEAREYIGQFHTLADWCADWPAALRQRLNQRQPALKPVFNLTGTVLHTNLGRAPLAESAIAAVTDAMRSAVTLEYSLEGAGRGHRDRAVADLLCALTGAEDACIVNNNAAAVFLLLTVMAAGKQVVVSRGELVEIGGAFRIPDVMRQAGCELVEVGTTNRTHLKDYRQAINENTGLLMKVHTSNYSIEGFTAAVSEQQLAALGQECSIPTATDLGSGSLVDMTRYGLPAEPMPQQLIAAGVDLVTFSGDKLLGGPQAGIILGKKQWIERLQQHPLKRALRADKMTLAALDATLRLYQQPDRLVEQLPSLRLLTRPASEIAACAQRLLAPLIACYGTDFTLDIESCWSQIGSGSLPVDRLPSWALTFTPKDGRGSTLEALTARWRTLTKPVIGRVADGRLWLDLRCLEDEAALLRELAS</sequence>